<organism>
    <name type="scientific">Koribacter versatilis (strain Ellin345)</name>
    <dbReference type="NCBI Taxonomy" id="204669"/>
    <lineage>
        <taxon>Bacteria</taxon>
        <taxon>Pseudomonadati</taxon>
        <taxon>Acidobacteriota</taxon>
        <taxon>Terriglobia</taxon>
        <taxon>Terriglobales</taxon>
        <taxon>Candidatus Korobacteraceae</taxon>
        <taxon>Candidatus Korobacter</taxon>
    </lineage>
</organism>
<evidence type="ECO:0000255" key="1">
    <source>
        <dbReference type="HAMAP-Rule" id="MF_01309"/>
    </source>
</evidence>
<evidence type="ECO:0000305" key="2"/>
<protein>
    <recommendedName>
        <fullName evidence="1">Small ribosomal subunit protein uS3</fullName>
    </recommendedName>
    <alternativeName>
        <fullName evidence="2">30S ribosomal protein S3</fullName>
    </alternativeName>
</protein>
<reference key="1">
    <citation type="journal article" date="2009" name="Appl. Environ. Microbiol.">
        <title>Three genomes from the phylum Acidobacteria provide insight into the lifestyles of these microorganisms in soils.</title>
        <authorList>
            <person name="Ward N.L."/>
            <person name="Challacombe J.F."/>
            <person name="Janssen P.H."/>
            <person name="Henrissat B."/>
            <person name="Coutinho P.M."/>
            <person name="Wu M."/>
            <person name="Xie G."/>
            <person name="Haft D.H."/>
            <person name="Sait M."/>
            <person name="Badger J."/>
            <person name="Barabote R.D."/>
            <person name="Bradley B."/>
            <person name="Brettin T.S."/>
            <person name="Brinkac L.M."/>
            <person name="Bruce D."/>
            <person name="Creasy T."/>
            <person name="Daugherty S.C."/>
            <person name="Davidsen T.M."/>
            <person name="DeBoy R.T."/>
            <person name="Detter J.C."/>
            <person name="Dodson R.J."/>
            <person name="Durkin A.S."/>
            <person name="Ganapathy A."/>
            <person name="Gwinn-Giglio M."/>
            <person name="Han C.S."/>
            <person name="Khouri H."/>
            <person name="Kiss H."/>
            <person name="Kothari S.P."/>
            <person name="Madupu R."/>
            <person name="Nelson K.E."/>
            <person name="Nelson W.C."/>
            <person name="Paulsen I."/>
            <person name="Penn K."/>
            <person name="Ren Q."/>
            <person name="Rosovitz M.J."/>
            <person name="Selengut J.D."/>
            <person name="Shrivastava S."/>
            <person name="Sullivan S.A."/>
            <person name="Tapia R."/>
            <person name="Thompson L.S."/>
            <person name="Watkins K.L."/>
            <person name="Yang Q."/>
            <person name="Yu C."/>
            <person name="Zafar N."/>
            <person name="Zhou L."/>
            <person name="Kuske C.R."/>
        </authorList>
    </citation>
    <scope>NUCLEOTIDE SEQUENCE [LARGE SCALE GENOMIC DNA]</scope>
    <source>
        <strain>Ellin345</strain>
    </source>
</reference>
<proteinExistence type="inferred from homology"/>
<name>RS3_KORVE</name>
<dbReference type="EMBL" id="CP000360">
    <property type="protein sequence ID" value="ABF40234.1"/>
    <property type="molecule type" value="Genomic_DNA"/>
</dbReference>
<dbReference type="RefSeq" id="WP_011522036.1">
    <property type="nucleotide sequence ID" value="NC_008009.1"/>
</dbReference>
<dbReference type="SMR" id="Q1ISB6"/>
<dbReference type="STRING" id="204669.Acid345_1232"/>
<dbReference type="EnsemblBacteria" id="ABF40234">
    <property type="protein sequence ID" value="ABF40234"/>
    <property type="gene ID" value="Acid345_1232"/>
</dbReference>
<dbReference type="KEGG" id="aba:Acid345_1232"/>
<dbReference type="eggNOG" id="COG0092">
    <property type="taxonomic scope" value="Bacteria"/>
</dbReference>
<dbReference type="HOGENOM" id="CLU_058591_0_2_0"/>
<dbReference type="OrthoDB" id="9806396at2"/>
<dbReference type="Proteomes" id="UP000002432">
    <property type="component" value="Chromosome"/>
</dbReference>
<dbReference type="GO" id="GO:0022627">
    <property type="term" value="C:cytosolic small ribosomal subunit"/>
    <property type="evidence" value="ECO:0007669"/>
    <property type="project" value="TreeGrafter"/>
</dbReference>
<dbReference type="GO" id="GO:0003729">
    <property type="term" value="F:mRNA binding"/>
    <property type="evidence" value="ECO:0007669"/>
    <property type="project" value="UniProtKB-UniRule"/>
</dbReference>
<dbReference type="GO" id="GO:0019843">
    <property type="term" value="F:rRNA binding"/>
    <property type="evidence" value="ECO:0007669"/>
    <property type="project" value="UniProtKB-UniRule"/>
</dbReference>
<dbReference type="GO" id="GO:0003735">
    <property type="term" value="F:structural constituent of ribosome"/>
    <property type="evidence" value="ECO:0007669"/>
    <property type="project" value="InterPro"/>
</dbReference>
<dbReference type="GO" id="GO:0006412">
    <property type="term" value="P:translation"/>
    <property type="evidence" value="ECO:0007669"/>
    <property type="project" value="UniProtKB-UniRule"/>
</dbReference>
<dbReference type="CDD" id="cd02412">
    <property type="entry name" value="KH-II_30S_S3"/>
    <property type="match status" value="1"/>
</dbReference>
<dbReference type="FunFam" id="3.30.1140.32:FF:000002">
    <property type="entry name" value="30S ribosomal protein S3"/>
    <property type="match status" value="1"/>
</dbReference>
<dbReference type="FunFam" id="3.30.300.20:FF:000001">
    <property type="entry name" value="30S ribosomal protein S3"/>
    <property type="match status" value="1"/>
</dbReference>
<dbReference type="Gene3D" id="3.30.300.20">
    <property type="match status" value="1"/>
</dbReference>
<dbReference type="Gene3D" id="3.30.1140.32">
    <property type="entry name" value="Ribosomal protein S3, C-terminal domain"/>
    <property type="match status" value="1"/>
</dbReference>
<dbReference type="HAMAP" id="MF_01309_B">
    <property type="entry name" value="Ribosomal_uS3_B"/>
    <property type="match status" value="1"/>
</dbReference>
<dbReference type="InterPro" id="IPR004087">
    <property type="entry name" value="KH_dom"/>
</dbReference>
<dbReference type="InterPro" id="IPR015946">
    <property type="entry name" value="KH_dom-like_a/b"/>
</dbReference>
<dbReference type="InterPro" id="IPR004044">
    <property type="entry name" value="KH_dom_type_2"/>
</dbReference>
<dbReference type="InterPro" id="IPR009019">
    <property type="entry name" value="KH_sf_prok-type"/>
</dbReference>
<dbReference type="InterPro" id="IPR036419">
    <property type="entry name" value="Ribosomal_S3_C_sf"/>
</dbReference>
<dbReference type="InterPro" id="IPR005704">
    <property type="entry name" value="Ribosomal_uS3_bac-typ"/>
</dbReference>
<dbReference type="InterPro" id="IPR001351">
    <property type="entry name" value="Ribosomal_uS3_C"/>
</dbReference>
<dbReference type="InterPro" id="IPR018280">
    <property type="entry name" value="Ribosomal_uS3_CS"/>
</dbReference>
<dbReference type="NCBIfam" id="TIGR01009">
    <property type="entry name" value="rpsC_bact"/>
    <property type="match status" value="1"/>
</dbReference>
<dbReference type="PANTHER" id="PTHR11760">
    <property type="entry name" value="30S/40S RIBOSOMAL PROTEIN S3"/>
    <property type="match status" value="1"/>
</dbReference>
<dbReference type="PANTHER" id="PTHR11760:SF19">
    <property type="entry name" value="SMALL RIBOSOMAL SUBUNIT PROTEIN US3C"/>
    <property type="match status" value="1"/>
</dbReference>
<dbReference type="Pfam" id="PF07650">
    <property type="entry name" value="KH_2"/>
    <property type="match status" value="1"/>
</dbReference>
<dbReference type="Pfam" id="PF00189">
    <property type="entry name" value="Ribosomal_S3_C"/>
    <property type="match status" value="1"/>
</dbReference>
<dbReference type="SMART" id="SM00322">
    <property type="entry name" value="KH"/>
    <property type="match status" value="1"/>
</dbReference>
<dbReference type="SUPFAM" id="SSF54814">
    <property type="entry name" value="Prokaryotic type KH domain (KH-domain type II)"/>
    <property type="match status" value="1"/>
</dbReference>
<dbReference type="SUPFAM" id="SSF54821">
    <property type="entry name" value="Ribosomal protein S3 C-terminal domain"/>
    <property type="match status" value="1"/>
</dbReference>
<dbReference type="PROSITE" id="PS50823">
    <property type="entry name" value="KH_TYPE_2"/>
    <property type="match status" value="1"/>
</dbReference>
<dbReference type="PROSITE" id="PS00548">
    <property type="entry name" value="RIBOSOMAL_S3"/>
    <property type="match status" value="1"/>
</dbReference>
<sequence>MGQKVHPYGFRLGYTKPWKSRWFIERDYDKLLLEDVKLKAELKEKLKSAGVSSIEVERPGNKLRIIIRTARPGIIIGRKGAEIDKLKGELQKRTNREVYIDIQEVHKPELDAQLVAESIALQLEKRVGFRRAMRKSVDSALRFGCKGIKVRVSGRLNGNEIARSEWYLQGRLPLHTLRADIDYGFAEARTTYGVIGVKAWVYKGEILPAAKKREPQVATAGNF</sequence>
<gene>
    <name evidence="1" type="primary">rpsC</name>
    <name type="ordered locus">Acid345_1232</name>
</gene>
<comment type="function">
    <text evidence="1">Binds the lower part of the 30S subunit head. Binds mRNA in the 70S ribosome, positioning it for translation.</text>
</comment>
<comment type="subunit">
    <text evidence="1">Part of the 30S ribosomal subunit. Forms a tight complex with proteins S10 and S14.</text>
</comment>
<comment type="similarity">
    <text evidence="1">Belongs to the universal ribosomal protein uS3 family.</text>
</comment>
<feature type="chain" id="PRO_0000293738" description="Small ribosomal subunit protein uS3">
    <location>
        <begin position="1"/>
        <end position="223"/>
    </location>
</feature>
<feature type="domain" description="KH type-2" evidence="1">
    <location>
        <begin position="38"/>
        <end position="106"/>
    </location>
</feature>
<keyword id="KW-1185">Reference proteome</keyword>
<keyword id="KW-0687">Ribonucleoprotein</keyword>
<keyword id="KW-0689">Ribosomal protein</keyword>
<keyword id="KW-0694">RNA-binding</keyword>
<keyword id="KW-0699">rRNA-binding</keyword>
<accession>Q1ISB6</accession>